<proteinExistence type="inferred from homology"/>
<sequence length="559" mass="61058">MSSLQQPIPPNSTLATTASSNQSGSNDFVKKLFLMLQEDSYKEVVRWTVKGDSFVVINTNEFTKDILPKHFKHSNFASFVRQLNKYDFHKVKISNEAKASYPYGEDAWEFKHPEFRINDAEALENIKRKGPTAKKSASNVTIKTEANNNGTQPTCNHNYSQLVSATNHLKEQVESLKNDKHSLYQEISVLERKYKTVVENIVAINTFNERYYRSMNVLINSIVQNGMKLPPLDFPPPVQLGPDSGIGSNLGPISSDTALPSISHHLSSPLPHHQQLLNRTIRPISSPIDGIPLVKLQQQSLGQNLQAPIGTPSAVPFSEEASSSIQAATPAPLAQPVAQPINQPPPPPPPPATQQQPLPPPPPPATATSQIPSAPPPPTQQQVGTSSSSVPTISPKSQGIVVSNSASPTTSAQISTTSVPNPKFHVLLVEDDNVCIQLCRKFLVKYGCSVTVVTDGLNAISTVEHTKYDLVLMDIVMPNLDGATATSVIRSFDTKTPIIAMTGNIEDNDLVTYLQNGMSDILAKPFTKDDLYAILSKHLLDPKENKQDNEPTVKKQKLS</sequence>
<evidence type="ECO:0000250" key="1"/>
<evidence type="ECO:0000250" key="2">
    <source>
        <dbReference type="UniProtKB" id="G0SB31"/>
    </source>
</evidence>
<evidence type="ECO:0000250" key="3">
    <source>
        <dbReference type="UniProtKB" id="P38889"/>
    </source>
</evidence>
<evidence type="ECO:0000255" key="4"/>
<evidence type="ECO:0000255" key="5">
    <source>
        <dbReference type="PROSITE-ProRule" id="PRU00169"/>
    </source>
</evidence>
<evidence type="ECO:0000256" key="6">
    <source>
        <dbReference type="SAM" id="MobiDB-lite"/>
    </source>
</evidence>
<evidence type="ECO:0000269" key="7">
    <source>
    </source>
</evidence>
<evidence type="ECO:0000305" key="8"/>
<dbReference type="EMBL" id="CP017627">
    <property type="protein sequence ID" value="AOW29470.1"/>
    <property type="molecule type" value="Genomic_DNA"/>
</dbReference>
<dbReference type="RefSeq" id="XP_716809.1">
    <property type="nucleotide sequence ID" value="XM_711716.1"/>
</dbReference>
<dbReference type="SMR" id="Q5A4X5"/>
<dbReference type="FunCoup" id="Q5A4X5">
    <property type="interactions" value="869"/>
</dbReference>
<dbReference type="STRING" id="237561.Q5A4X5"/>
<dbReference type="EnsemblFungi" id="C5_00240W_A-T">
    <property type="protein sequence ID" value="C5_00240W_A-T-p1"/>
    <property type="gene ID" value="C5_00240W_A"/>
</dbReference>
<dbReference type="GeneID" id="3641563"/>
<dbReference type="KEGG" id="cal:CAALFM_C500240WA"/>
<dbReference type="CGD" id="CAL0000174257">
    <property type="gene designation" value="SKN7"/>
</dbReference>
<dbReference type="VEuPathDB" id="FungiDB:C5_00240W_A"/>
<dbReference type="eggNOG" id="KOG0519">
    <property type="taxonomic scope" value="Eukaryota"/>
</dbReference>
<dbReference type="eggNOG" id="KOG0627">
    <property type="taxonomic scope" value="Eukaryota"/>
</dbReference>
<dbReference type="HOGENOM" id="CLU_008776_3_1_1"/>
<dbReference type="InParanoid" id="Q5A4X5"/>
<dbReference type="OMA" id="TNVDPGW"/>
<dbReference type="OrthoDB" id="424572at2759"/>
<dbReference type="PHI-base" id="PHI:380"/>
<dbReference type="PRO" id="PR:Q5A4X5"/>
<dbReference type="Proteomes" id="UP000000559">
    <property type="component" value="Chromosome 5"/>
</dbReference>
<dbReference type="GO" id="GO:0005829">
    <property type="term" value="C:cytosol"/>
    <property type="evidence" value="ECO:0007669"/>
    <property type="project" value="EnsemblFungi"/>
</dbReference>
<dbReference type="GO" id="GO:0005634">
    <property type="term" value="C:nucleus"/>
    <property type="evidence" value="ECO:0007669"/>
    <property type="project" value="UniProtKB-SubCell"/>
</dbReference>
<dbReference type="GO" id="GO:0003700">
    <property type="term" value="F:DNA-binding transcription factor activity"/>
    <property type="evidence" value="ECO:0007669"/>
    <property type="project" value="EnsemblFungi"/>
</dbReference>
<dbReference type="GO" id="GO:0000156">
    <property type="term" value="F:phosphorelay response regulator activity"/>
    <property type="evidence" value="ECO:0000250"/>
    <property type="project" value="CGD"/>
</dbReference>
<dbReference type="GO" id="GO:0043565">
    <property type="term" value="F:sequence-specific DNA binding"/>
    <property type="evidence" value="ECO:0007669"/>
    <property type="project" value="InterPro"/>
</dbReference>
<dbReference type="GO" id="GO:0034599">
    <property type="term" value="P:cellular response to oxidative stress"/>
    <property type="evidence" value="ECO:0000315"/>
    <property type="project" value="CGD"/>
</dbReference>
<dbReference type="GO" id="GO:0009267">
    <property type="term" value="P:cellular response to starvation"/>
    <property type="evidence" value="ECO:0000315"/>
    <property type="project" value="CGD"/>
</dbReference>
<dbReference type="GO" id="GO:0030447">
    <property type="term" value="P:filamentous growth"/>
    <property type="evidence" value="ECO:0000315"/>
    <property type="project" value="CGD"/>
</dbReference>
<dbReference type="GO" id="GO:0036180">
    <property type="term" value="P:filamentous growth of a population of unicellular organisms in response to biotic stimulus"/>
    <property type="evidence" value="ECO:0000315"/>
    <property type="project" value="CGD"/>
</dbReference>
<dbReference type="GO" id="GO:0036170">
    <property type="term" value="P:filamentous growth of a population of unicellular organisms in response to starvation"/>
    <property type="evidence" value="ECO:0000315"/>
    <property type="project" value="CGD"/>
</dbReference>
<dbReference type="GO" id="GO:0000160">
    <property type="term" value="P:phosphorelay signal transduction system"/>
    <property type="evidence" value="ECO:0000250"/>
    <property type="project" value="CGD"/>
</dbReference>
<dbReference type="GO" id="GO:1900445">
    <property type="term" value="P:positive regulation of filamentous growth of a population of unicellular organisms in response to biotic stimulus"/>
    <property type="evidence" value="ECO:0000315"/>
    <property type="project" value="CGD"/>
</dbReference>
<dbReference type="GO" id="GO:1900436">
    <property type="term" value="P:positive regulation of filamentous growth of a population of unicellular organisms in response to starvation"/>
    <property type="evidence" value="ECO:0000315"/>
    <property type="project" value="CGD"/>
</dbReference>
<dbReference type="GO" id="GO:0008361">
    <property type="term" value="P:regulation of cell size"/>
    <property type="evidence" value="ECO:0007669"/>
    <property type="project" value="EnsemblFungi"/>
</dbReference>
<dbReference type="GO" id="GO:1900101">
    <property type="term" value="P:regulation of endoplasmic reticulum unfolded protein response"/>
    <property type="evidence" value="ECO:0007669"/>
    <property type="project" value="EnsemblFungi"/>
</dbReference>
<dbReference type="GO" id="GO:0006357">
    <property type="term" value="P:regulation of transcription by RNA polymerase II"/>
    <property type="evidence" value="ECO:0007669"/>
    <property type="project" value="EnsemblFungi"/>
</dbReference>
<dbReference type="GO" id="GO:0000304">
    <property type="term" value="P:response to singlet oxygen"/>
    <property type="evidence" value="ECO:0007669"/>
    <property type="project" value="EnsemblFungi"/>
</dbReference>
<dbReference type="GO" id="GO:0006368">
    <property type="term" value="P:transcription elongation by RNA polymerase II"/>
    <property type="evidence" value="ECO:0007669"/>
    <property type="project" value="EnsemblFungi"/>
</dbReference>
<dbReference type="CDD" id="cd17546">
    <property type="entry name" value="REC_hyHK_CKI1_RcsC-like"/>
    <property type="match status" value="1"/>
</dbReference>
<dbReference type="FunFam" id="1.10.10.10:FF:000380">
    <property type="entry name" value="Transcription factor SKN7"/>
    <property type="match status" value="1"/>
</dbReference>
<dbReference type="FunFam" id="3.40.50.2300:FF:000439">
    <property type="entry name" value="Transcription factor SKN7"/>
    <property type="match status" value="1"/>
</dbReference>
<dbReference type="Gene3D" id="3.40.50.2300">
    <property type="match status" value="1"/>
</dbReference>
<dbReference type="Gene3D" id="1.10.10.10">
    <property type="entry name" value="Winged helix-like DNA-binding domain superfamily/Winged helix DNA-binding domain"/>
    <property type="match status" value="1"/>
</dbReference>
<dbReference type="InterPro" id="IPR011006">
    <property type="entry name" value="CheY-like_superfamily"/>
</dbReference>
<dbReference type="InterPro" id="IPR000232">
    <property type="entry name" value="HSF_DNA-bd"/>
</dbReference>
<dbReference type="InterPro" id="IPR001789">
    <property type="entry name" value="Sig_transdc_resp-reg_receiver"/>
</dbReference>
<dbReference type="InterPro" id="IPR014402">
    <property type="entry name" value="Sig_transdc_resp-reg_Skn7"/>
</dbReference>
<dbReference type="InterPro" id="IPR036388">
    <property type="entry name" value="WH-like_DNA-bd_sf"/>
</dbReference>
<dbReference type="InterPro" id="IPR036390">
    <property type="entry name" value="WH_DNA-bd_sf"/>
</dbReference>
<dbReference type="PANTHER" id="PTHR45339">
    <property type="entry name" value="HYBRID SIGNAL TRANSDUCTION HISTIDINE KINASE J"/>
    <property type="match status" value="1"/>
</dbReference>
<dbReference type="PANTHER" id="PTHR45339:SF1">
    <property type="entry name" value="HYBRID SIGNAL TRANSDUCTION HISTIDINE KINASE J"/>
    <property type="match status" value="1"/>
</dbReference>
<dbReference type="Pfam" id="PF00447">
    <property type="entry name" value="HSF_DNA-bind"/>
    <property type="match status" value="1"/>
</dbReference>
<dbReference type="Pfam" id="PF00072">
    <property type="entry name" value="Response_reg"/>
    <property type="match status" value="1"/>
</dbReference>
<dbReference type="PIRSF" id="PIRSF002595">
    <property type="entry name" value="RR_SKN7"/>
    <property type="match status" value="1"/>
</dbReference>
<dbReference type="PRINTS" id="PR00056">
    <property type="entry name" value="HSFDOMAIN"/>
</dbReference>
<dbReference type="SMART" id="SM00415">
    <property type="entry name" value="HSF"/>
    <property type="match status" value="1"/>
</dbReference>
<dbReference type="SMART" id="SM00448">
    <property type="entry name" value="REC"/>
    <property type="match status" value="1"/>
</dbReference>
<dbReference type="SUPFAM" id="SSF52172">
    <property type="entry name" value="CheY-like"/>
    <property type="match status" value="1"/>
</dbReference>
<dbReference type="SUPFAM" id="SSF46785">
    <property type="entry name" value="Winged helix' DNA-binding domain"/>
    <property type="match status" value="1"/>
</dbReference>
<dbReference type="PROSITE" id="PS00434">
    <property type="entry name" value="HSF_DOMAIN"/>
    <property type="match status" value="1"/>
</dbReference>
<dbReference type="PROSITE" id="PS50110">
    <property type="entry name" value="RESPONSE_REGULATORY"/>
    <property type="match status" value="1"/>
</dbReference>
<accession>Q5A4X5</accession>
<accession>A0A1D8PMV6</accession>
<reference key="1">
    <citation type="journal article" date="2004" name="Proc. Natl. Acad. Sci. U.S.A.">
        <title>The diploid genome sequence of Candida albicans.</title>
        <authorList>
            <person name="Jones T."/>
            <person name="Federspiel N.A."/>
            <person name="Chibana H."/>
            <person name="Dungan J."/>
            <person name="Kalman S."/>
            <person name="Magee B.B."/>
            <person name="Newport G."/>
            <person name="Thorstenson Y.R."/>
            <person name="Agabian N."/>
            <person name="Magee P.T."/>
            <person name="Davis R.W."/>
            <person name="Scherer S."/>
        </authorList>
    </citation>
    <scope>NUCLEOTIDE SEQUENCE [LARGE SCALE GENOMIC DNA]</scope>
    <source>
        <strain>SC5314 / ATCC MYA-2876</strain>
    </source>
</reference>
<reference key="2">
    <citation type="journal article" date="2007" name="Genome Biol.">
        <title>Assembly of the Candida albicans genome into sixteen supercontigs aligned on the eight chromosomes.</title>
        <authorList>
            <person name="van het Hoog M."/>
            <person name="Rast T.J."/>
            <person name="Martchenko M."/>
            <person name="Grindle S."/>
            <person name="Dignard D."/>
            <person name="Hogues H."/>
            <person name="Cuomo C."/>
            <person name="Berriman M."/>
            <person name="Scherer S."/>
            <person name="Magee B.B."/>
            <person name="Whiteway M."/>
            <person name="Chibana H."/>
            <person name="Nantel A."/>
            <person name="Magee P.T."/>
        </authorList>
    </citation>
    <scope>GENOME REANNOTATION</scope>
    <source>
        <strain>SC5314 / ATCC MYA-2876</strain>
    </source>
</reference>
<reference key="3">
    <citation type="journal article" date="2013" name="Genome Biol.">
        <title>Assembly of a phased diploid Candida albicans genome facilitates allele-specific measurements and provides a simple model for repeat and indel structure.</title>
        <authorList>
            <person name="Muzzey D."/>
            <person name="Schwartz K."/>
            <person name="Weissman J.S."/>
            <person name="Sherlock G."/>
        </authorList>
    </citation>
    <scope>NUCLEOTIDE SEQUENCE [LARGE SCALE GENOMIC DNA]</scope>
    <scope>GENOME REANNOTATION</scope>
    <source>
        <strain>SC5314 / ATCC MYA-2876</strain>
    </source>
</reference>
<reference key="4">
    <citation type="journal article" date="2004" name="Infect. Immun.">
        <title>SKN7 of Candida albicans: mutant construction and phenotype analysis.</title>
        <authorList>
            <person name="Singh P."/>
            <person name="Chauhan N."/>
            <person name="Ghosh A."/>
            <person name="Dixon F."/>
            <person name="Calderone R."/>
        </authorList>
    </citation>
    <scope>DISRUPTION PHENOTYPE</scope>
</reference>
<keyword id="KW-0175">Coiled coil</keyword>
<keyword id="KW-0238">DNA-binding</keyword>
<keyword id="KW-0539">Nucleus</keyword>
<keyword id="KW-0597">Phosphoprotein</keyword>
<keyword id="KW-1185">Reference proteome</keyword>
<keyword id="KW-0346">Stress response</keyword>
<keyword id="KW-0804">Transcription</keyword>
<keyword id="KW-0805">Transcription regulation</keyword>
<keyword id="KW-0902">Two-component regulatory system</keyword>
<protein>
    <recommendedName>
        <fullName>Transcription factor SKN7</fullName>
    </recommendedName>
</protein>
<comment type="function">
    <text evidence="3">Transcription factor that is part of a SLN1-YPD1-SKN7 two-component regulatory system, which controls gene expression in response to changes in the osmolarity of the extracellular environment. Under low osmotic conditions, phosphorylated and activated by the phosphorelay intermediate protein YPD1. Also activated in response to oxidative stress, independent on the two-component regulatory system. Regulates heat shock genes in response to oxidative stress and genes involved in cell wall integrity in response to osmotic changes.</text>
</comment>
<comment type="subunit">
    <text evidence="2">Homotrimer.</text>
</comment>
<comment type="subcellular location">
    <subcellularLocation>
        <location evidence="3">Nucleus</location>
    </subcellularLocation>
</comment>
<comment type="domain">
    <text evidence="2">Homotrimerization occurs through formation of a three-stranded coiled-coil structure generated by intermolecular interactions between HR-A/B regions allowing DNA-binding activity.</text>
</comment>
<comment type="PTM">
    <text evidence="1">Phosphorylated by the phosphorelay intermediate protein YPD1.</text>
</comment>
<comment type="disruption phenotype">
    <text evidence="7">Leads to sensitivity to H(2)O(2) in vitro, but only mildly attenuated virulence.</text>
</comment>
<comment type="similarity">
    <text evidence="8">Belongs to the SKN7 family.</text>
</comment>
<name>SKN7_CANAL</name>
<gene>
    <name type="primary">SKN7</name>
    <name type="ordered locus">CAALFM_C500240WA</name>
    <name type="ORF">CaO19.8586</name>
    <name type="ORF">CaO19.971</name>
</gene>
<feature type="chain" id="PRO_0000425801" description="Transcription factor SKN7">
    <location>
        <begin position="1"/>
        <end position="559"/>
    </location>
</feature>
<feature type="domain" description="Response regulatory" evidence="5">
    <location>
        <begin position="425"/>
        <end position="539"/>
    </location>
</feature>
<feature type="region of interest" description="Disordered" evidence="6">
    <location>
        <begin position="1"/>
        <end position="23"/>
    </location>
</feature>
<feature type="region of interest" description="DNA-binding domain" evidence="2">
    <location>
        <begin position="25"/>
        <end position="131"/>
    </location>
</feature>
<feature type="region of interest" description="Hydrophobic repeat HR-A/B" evidence="2">
    <location>
        <begin position="151"/>
        <end position="222"/>
    </location>
</feature>
<feature type="region of interest" description="Disordered" evidence="6">
    <location>
        <begin position="312"/>
        <end position="405"/>
    </location>
</feature>
<feature type="coiled-coil region" evidence="4">
    <location>
        <begin position="166"/>
        <end position="193"/>
    </location>
</feature>
<feature type="compositionally biased region" description="Pro residues" evidence="6">
    <location>
        <begin position="342"/>
        <end position="365"/>
    </location>
</feature>
<feature type="compositionally biased region" description="Low complexity" evidence="6">
    <location>
        <begin position="380"/>
        <end position="397"/>
    </location>
</feature>
<feature type="modified residue" description="4-aspartylphosphate" evidence="5">
    <location>
        <position position="474"/>
    </location>
</feature>
<organism>
    <name type="scientific">Candida albicans (strain SC5314 / ATCC MYA-2876)</name>
    <name type="common">Yeast</name>
    <dbReference type="NCBI Taxonomy" id="237561"/>
    <lineage>
        <taxon>Eukaryota</taxon>
        <taxon>Fungi</taxon>
        <taxon>Dikarya</taxon>
        <taxon>Ascomycota</taxon>
        <taxon>Saccharomycotina</taxon>
        <taxon>Pichiomycetes</taxon>
        <taxon>Debaryomycetaceae</taxon>
        <taxon>Candida/Lodderomyces clade</taxon>
        <taxon>Candida</taxon>
    </lineage>
</organism>